<evidence type="ECO:0000255" key="1">
    <source>
        <dbReference type="HAMAP-Rule" id="MF_00059"/>
    </source>
</evidence>
<sequence length="330" mass="36416">MQGSVTEFLKPRLVDIEQISTTHAKVTLEPLERGFGHTLGNALRRILLSSMPGCAVTEVEIEGVLHEYSTKEGVQEDILEILLNLKGLAVRVAEGKDEVFITLNKSGSGPVVAGDITHDGDVEIVNPEHVICHLTSDNAAIAMRIKVERGRGYVPASARIHTEEDERPIGRLLVDATFSPVDKIAYSVEAARVEQRTDLDKLVIDMETNGTLEPEEAIRRAATILAEQLDAFVDLRDVRVPEEKEEKPEFDPILLRPVDDLELTVRSANCLKAEAIHYIGDLVQRTEVELLKTPNLGKKSLTEIKDVLASRGLSLGMRLENWPPASIAED</sequence>
<name>RPOA_VIBCH</name>
<accession>Q9KP08</accession>
<proteinExistence type="inferred from homology"/>
<keyword id="KW-0240">DNA-directed RNA polymerase</keyword>
<keyword id="KW-0548">Nucleotidyltransferase</keyword>
<keyword id="KW-1185">Reference proteome</keyword>
<keyword id="KW-0804">Transcription</keyword>
<keyword id="KW-0808">Transferase</keyword>
<reference key="1">
    <citation type="journal article" date="2000" name="Nature">
        <title>DNA sequence of both chromosomes of the cholera pathogen Vibrio cholerae.</title>
        <authorList>
            <person name="Heidelberg J.F."/>
            <person name="Eisen J.A."/>
            <person name="Nelson W.C."/>
            <person name="Clayton R.A."/>
            <person name="Gwinn M.L."/>
            <person name="Dodson R.J."/>
            <person name="Haft D.H."/>
            <person name="Hickey E.K."/>
            <person name="Peterson J.D."/>
            <person name="Umayam L.A."/>
            <person name="Gill S.R."/>
            <person name="Nelson K.E."/>
            <person name="Read T.D."/>
            <person name="Tettelin H."/>
            <person name="Richardson D.L."/>
            <person name="Ermolaeva M.D."/>
            <person name="Vamathevan J.J."/>
            <person name="Bass S."/>
            <person name="Qin H."/>
            <person name="Dragoi I."/>
            <person name="Sellers P."/>
            <person name="McDonald L.A."/>
            <person name="Utterback T.R."/>
            <person name="Fleischmann R.D."/>
            <person name="Nierman W.C."/>
            <person name="White O."/>
            <person name="Salzberg S.L."/>
            <person name="Smith H.O."/>
            <person name="Colwell R.R."/>
            <person name="Mekalanos J.J."/>
            <person name="Venter J.C."/>
            <person name="Fraser C.M."/>
        </authorList>
    </citation>
    <scope>NUCLEOTIDE SEQUENCE [LARGE SCALE GENOMIC DNA]</scope>
    <source>
        <strain>ATCC 39315 / El Tor Inaba N16961</strain>
    </source>
</reference>
<protein>
    <recommendedName>
        <fullName evidence="1">DNA-directed RNA polymerase subunit alpha</fullName>
        <shortName evidence="1">RNAP subunit alpha</shortName>
        <ecNumber evidence="1">2.7.7.6</ecNumber>
    </recommendedName>
    <alternativeName>
        <fullName evidence="1">RNA polymerase subunit alpha</fullName>
    </alternativeName>
    <alternativeName>
        <fullName evidence="1">Transcriptase subunit alpha</fullName>
    </alternativeName>
</protein>
<gene>
    <name evidence="1" type="primary">rpoA</name>
    <name type="ordered locus">VC_2571</name>
</gene>
<organism>
    <name type="scientific">Vibrio cholerae serotype O1 (strain ATCC 39315 / El Tor Inaba N16961)</name>
    <dbReference type="NCBI Taxonomy" id="243277"/>
    <lineage>
        <taxon>Bacteria</taxon>
        <taxon>Pseudomonadati</taxon>
        <taxon>Pseudomonadota</taxon>
        <taxon>Gammaproteobacteria</taxon>
        <taxon>Vibrionales</taxon>
        <taxon>Vibrionaceae</taxon>
        <taxon>Vibrio</taxon>
    </lineage>
</organism>
<dbReference type="EC" id="2.7.7.6" evidence="1"/>
<dbReference type="EMBL" id="AE003852">
    <property type="protein sequence ID" value="AAF95712.1"/>
    <property type="molecule type" value="Genomic_DNA"/>
</dbReference>
<dbReference type="PIR" id="A82061">
    <property type="entry name" value="A82061"/>
</dbReference>
<dbReference type="RefSeq" id="NP_232199.1">
    <property type="nucleotide sequence ID" value="NC_002505.1"/>
</dbReference>
<dbReference type="RefSeq" id="WP_001162087.1">
    <property type="nucleotide sequence ID" value="NZ_LT906614.1"/>
</dbReference>
<dbReference type="SMR" id="Q9KP08"/>
<dbReference type="STRING" id="243277.VC_2571"/>
<dbReference type="DNASU" id="2615588"/>
<dbReference type="EnsemblBacteria" id="AAF95712">
    <property type="protein sequence ID" value="AAF95712"/>
    <property type="gene ID" value="VC_2571"/>
</dbReference>
<dbReference type="GeneID" id="94012777"/>
<dbReference type="KEGG" id="vch:VC_2571"/>
<dbReference type="PATRIC" id="fig|243277.26.peg.2450"/>
<dbReference type="eggNOG" id="COG0202">
    <property type="taxonomic scope" value="Bacteria"/>
</dbReference>
<dbReference type="HOGENOM" id="CLU_053084_0_0_6"/>
<dbReference type="Proteomes" id="UP000000584">
    <property type="component" value="Chromosome 1"/>
</dbReference>
<dbReference type="GO" id="GO:0005737">
    <property type="term" value="C:cytoplasm"/>
    <property type="evidence" value="ECO:0000318"/>
    <property type="project" value="GO_Central"/>
</dbReference>
<dbReference type="GO" id="GO:0000428">
    <property type="term" value="C:DNA-directed RNA polymerase complex"/>
    <property type="evidence" value="ECO:0007669"/>
    <property type="project" value="UniProtKB-KW"/>
</dbReference>
<dbReference type="GO" id="GO:0003677">
    <property type="term" value="F:DNA binding"/>
    <property type="evidence" value="ECO:0007669"/>
    <property type="project" value="UniProtKB-UniRule"/>
</dbReference>
<dbReference type="GO" id="GO:0003899">
    <property type="term" value="F:DNA-directed RNA polymerase activity"/>
    <property type="evidence" value="ECO:0007669"/>
    <property type="project" value="UniProtKB-UniRule"/>
</dbReference>
<dbReference type="GO" id="GO:0046983">
    <property type="term" value="F:protein dimerization activity"/>
    <property type="evidence" value="ECO:0007669"/>
    <property type="project" value="InterPro"/>
</dbReference>
<dbReference type="GO" id="GO:0006351">
    <property type="term" value="P:DNA-templated transcription"/>
    <property type="evidence" value="ECO:0007669"/>
    <property type="project" value="UniProtKB-UniRule"/>
</dbReference>
<dbReference type="CDD" id="cd06928">
    <property type="entry name" value="RNAP_alpha_NTD"/>
    <property type="match status" value="1"/>
</dbReference>
<dbReference type="FunFam" id="1.10.150.20:FF:000001">
    <property type="entry name" value="DNA-directed RNA polymerase subunit alpha"/>
    <property type="match status" value="1"/>
</dbReference>
<dbReference type="FunFam" id="2.170.120.12:FF:000001">
    <property type="entry name" value="DNA-directed RNA polymerase subunit alpha"/>
    <property type="match status" value="1"/>
</dbReference>
<dbReference type="Gene3D" id="1.10.150.20">
    <property type="entry name" value="5' to 3' exonuclease, C-terminal subdomain"/>
    <property type="match status" value="1"/>
</dbReference>
<dbReference type="Gene3D" id="2.170.120.12">
    <property type="entry name" value="DNA-directed RNA polymerase, insert domain"/>
    <property type="match status" value="1"/>
</dbReference>
<dbReference type="Gene3D" id="3.30.1360.10">
    <property type="entry name" value="RNA polymerase, RBP11-like subunit"/>
    <property type="match status" value="1"/>
</dbReference>
<dbReference type="HAMAP" id="MF_00059">
    <property type="entry name" value="RNApol_bact_RpoA"/>
    <property type="match status" value="1"/>
</dbReference>
<dbReference type="InterPro" id="IPR011262">
    <property type="entry name" value="DNA-dir_RNA_pol_insert"/>
</dbReference>
<dbReference type="InterPro" id="IPR011263">
    <property type="entry name" value="DNA-dir_RNA_pol_RpoA/D/Rpb3"/>
</dbReference>
<dbReference type="InterPro" id="IPR011773">
    <property type="entry name" value="DNA-dir_RpoA"/>
</dbReference>
<dbReference type="InterPro" id="IPR036603">
    <property type="entry name" value="RBP11-like"/>
</dbReference>
<dbReference type="InterPro" id="IPR011260">
    <property type="entry name" value="RNAP_asu_C"/>
</dbReference>
<dbReference type="InterPro" id="IPR036643">
    <property type="entry name" value="RNApol_insert_sf"/>
</dbReference>
<dbReference type="NCBIfam" id="NF003513">
    <property type="entry name" value="PRK05182.1-2"/>
    <property type="match status" value="1"/>
</dbReference>
<dbReference type="NCBIfam" id="NF003519">
    <property type="entry name" value="PRK05182.2-5"/>
    <property type="match status" value="1"/>
</dbReference>
<dbReference type="NCBIfam" id="TIGR02027">
    <property type="entry name" value="rpoA"/>
    <property type="match status" value="1"/>
</dbReference>
<dbReference type="Pfam" id="PF01000">
    <property type="entry name" value="RNA_pol_A_bac"/>
    <property type="match status" value="1"/>
</dbReference>
<dbReference type="Pfam" id="PF03118">
    <property type="entry name" value="RNA_pol_A_CTD"/>
    <property type="match status" value="1"/>
</dbReference>
<dbReference type="Pfam" id="PF01193">
    <property type="entry name" value="RNA_pol_L"/>
    <property type="match status" value="1"/>
</dbReference>
<dbReference type="SMART" id="SM00662">
    <property type="entry name" value="RPOLD"/>
    <property type="match status" value="1"/>
</dbReference>
<dbReference type="SUPFAM" id="SSF47789">
    <property type="entry name" value="C-terminal domain of RNA polymerase alpha subunit"/>
    <property type="match status" value="1"/>
</dbReference>
<dbReference type="SUPFAM" id="SSF56553">
    <property type="entry name" value="Insert subdomain of RNA polymerase alpha subunit"/>
    <property type="match status" value="1"/>
</dbReference>
<dbReference type="SUPFAM" id="SSF55257">
    <property type="entry name" value="RBP11-like subunits of RNA polymerase"/>
    <property type="match status" value="1"/>
</dbReference>
<comment type="function">
    <text evidence="1">DNA-dependent RNA polymerase catalyzes the transcription of DNA into RNA using the four ribonucleoside triphosphates as substrates.</text>
</comment>
<comment type="catalytic activity">
    <reaction evidence="1">
        <text>RNA(n) + a ribonucleoside 5'-triphosphate = RNA(n+1) + diphosphate</text>
        <dbReference type="Rhea" id="RHEA:21248"/>
        <dbReference type="Rhea" id="RHEA-COMP:14527"/>
        <dbReference type="Rhea" id="RHEA-COMP:17342"/>
        <dbReference type="ChEBI" id="CHEBI:33019"/>
        <dbReference type="ChEBI" id="CHEBI:61557"/>
        <dbReference type="ChEBI" id="CHEBI:140395"/>
        <dbReference type="EC" id="2.7.7.6"/>
    </reaction>
</comment>
<comment type="subunit">
    <text evidence="1">Homodimer. The RNAP catalytic core consists of 2 alpha, 1 beta, 1 beta' and 1 omega subunit. When a sigma factor is associated with the core the holoenzyme is formed, which can initiate transcription.</text>
</comment>
<comment type="domain">
    <text evidence="1">The N-terminal domain is essential for RNAP assembly and basal transcription, whereas the C-terminal domain is involved in interaction with transcriptional regulators and with upstream promoter elements.</text>
</comment>
<comment type="similarity">
    <text evidence="1">Belongs to the RNA polymerase alpha chain family.</text>
</comment>
<feature type="chain" id="PRO_0000175416" description="DNA-directed RNA polymerase subunit alpha">
    <location>
        <begin position="1"/>
        <end position="330"/>
    </location>
</feature>
<feature type="region of interest" description="Alpha N-terminal domain (alpha-NTD)" evidence="1">
    <location>
        <begin position="1"/>
        <end position="236"/>
    </location>
</feature>
<feature type="region of interest" description="Alpha C-terminal domain (alpha-CTD)" evidence="1">
    <location>
        <begin position="250"/>
        <end position="330"/>
    </location>
</feature>